<evidence type="ECO:0000255" key="1">
    <source>
        <dbReference type="HAMAP-Rule" id="MF_00508"/>
    </source>
</evidence>
<evidence type="ECO:0000305" key="2"/>
<comment type="function">
    <text evidence="1">Involved in the binding of tRNA to the ribosomes.</text>
</comment>
<comment type="subunit">
    <text evidence="1">Part of the 30S ribosomal subunit.</text>
</comment>
<comment type="similarity">
    <text evidence="1">Belongs to the universal ribosomal protein uS10 family.</text>
</comment>
<organism>
    <name type="scientific">Edwardsiella ictaluri (strain 93-146)</name>
    <dbReference type="NCBI Taxonomy" id="634503"/>
    <lineage>
        <taxon>Bacteria</taxon>
        <taxon>Pseudomonadati</taxon>
        <taxon>Pseudomonadota</taxon>
        <taxon>Gammaproteobacteria</taxon>
        <taxon>Enterobacterales</taxon>
        <taxon>Hafniaceae</taxon>
        <taxon>Edwardsiella</taxon>
    </lineage>
</organism>
<gene>
    <name evidence="1" type="primary">rpsJ</name>
    <name type="ordered locus">NT01EI_3595</name>
</gene>
<dbReference type="EMBL" id="CP001600">
    <property type="protein sequence ID" value="ACR70723.1"/>
    <property type="molecule type" value="Genomic_DNA"/>
</dbReference>
<dbReference type="RefSeq" id="WP_001181005.1">
    <property type="nucleotide sequence ID" value="NZ_CP169062.1"/>
</dbReference>
<dbReference type="SMR" id="C5BGM6"/>
<dbReference type="STRING" id="67780.B6E78_09575"/>
<dbReference type="GeneID" id="98390443"/>
<dbReference type="KEGG" id="eic:NT01EI_3595"/>
<dbReference type="HOGENOM" id="CLU_122625_1_3_6"/>
<dbReference type="OrthoDB" id="9804464at2"/>
<dbReference type="Proteomes" id="UP000001485">
    <property type="component" value="Chromosome"/>
</dbReference>
<dbReference type="GO" id="GO:1990904">
    <property type="term" value="C:ribonucleoprotein complex"/>
    <property type="evidence" value="ECO:0007669"/>
    <property type="project" value="UniProtKB-KW"/>
</dbReference>
<dbReference type="GO" id="GO:0005840">
    <property type="term" value="C:ribosome"/>
    <property type="evidence" value="ECO:0007669"/>
    <property type="project" value="UniProtKB-KW"/>
</dbReference>
<dbReference type="GO" id="GO:0003735">
    <property type="term" value="F:structural constituent of ribosome"/>
    <property type="evidence" value="ECO:0007669"/>
    <property type="project" value="InterPro"/>
</dbReference>
<dbReference type="GO" id="GO:0000049">
    <property type="term" value="F:tRNA binding"/>
    <property type="evidence" value="ECO:0007669"/>
    <property type="project" value="UniProtKB-UniRule"/>
</dbReference>
<dbReference type="GO" id="GO:0006412">
    <property type="term" value="P:translation"/>
    <property type="evidence" value="ECO:0007669"/>
    <property type="project" value="UniProtKB-UniRule"/>
</dbReference>
<dbReference type="FunFam" id="3.30.70.600:FF:000001">
    <property type="entry name" value="30S ribosomal protein S10"/>
    <property type="match status" value="1"/>
</dbReference>
<dbReference type="Gene3D" id="3.30.70.600">
    <property type="entry name" value="Ribosomal protein S10 domain"/>
    <property type="match status" value="1"/>
</dbReference>
<dbReference type="HAMAP" id="MF_00508">
    <property type="entry name" value="Ribosomal_uS10"/>
    <property type="match status" value="1"/>
</dbReference>
<dbReference type="InterPro" id="IPR001848">
    <property type="entry name" value="Ribosomal_uS10"/>
</dbReference>
<dbReference type="InterPro" id="IPR018268">
    <property type="entry name" value="Ribosomal_uS10_CS"/>
</dbReference>
<dbReference type="InterPro" id="IPR027486">
    <property type="entry name" value="Ribosomal_uS10_dom"/>
</dbReference>
<dbReference type="InterPro" id="IPR036838">
    <property type="entry name" value="Ribosomal_uS10_dom_sf"/>
</dbReference>
<dbReference type="NCBIfam" id="NF001861">
    <property type="entry name" value="PRK00596.1"/>
    <property type="match status" value="1"/>
</dbReference>
<dbReference type="NCBIfam" id="TIGR01049">
    <property type="entry name" value="rpsJ_bact"/>
    <property type="match status" value="1"/>
</dbReference>
<dbReference type="PANTHER" id="PTHR11700">
    <property type="entry name" value="30S RIBOSOMAL PROTEIN S10 FAMILY MEMBER"/>
    <property type="match status" value="1"/>
</dbReference>
<dbReference type="Pfam" id="PF00338">
    <property type="entry name" value="Ribosomal_S10"/>
    <property type="match status" value="1"/>
</dbReference>
<dbReference type="PRINTS" id="PR00971">
    <property type="entry name" value="RIBOSOMALS10"/>
</dbReference>
<dbReference type="SMART" id="SM01403">
    <property type="entry name" value="Ribosomal_S10"/>
    <property type="match status" value="1"/>
</dbReference>
<dbReference type="SUPFAM" id="SSF54999">
    <property type="entry name" value="Ribosomal protein S10"/>
    <property type="match status" value="1"/>
</dbReference>
<dbReference type="PROSITE" id="PS00361">
    <property type="entry name" value="RIBOSOMAL_S10"/>
    <property type="match status" value="1"/>
</dbReference>
<sequence length="103" mass="11767">MQNQRIRIRLKAFDHRLIDQSTAEIVETAKRTGAQVRGPIPLPTRKERFTVLISPHVNKDARDQYEIRTHKRLVDIVEPTEKTVDALMRLDLAAGVDVQISLG</sequence>
<proteinExistence type="inferred from homology"/>
<protein>
    <recommendedName>
        <fullName evidence="1">Small ribosomal subunit protein uS10</fullName>
    </recommendedName>
    <alternativeName>
        <fullName evidence="2">30S ribosomal protein S10</fullName>
    </alternativeName>
</protein>
<feature type="chain" id="PRO_1000206583" description="Small ribosomal subunit protein uS10">
    <location>
        <begin position="1"/>
        <end position="103"/>
    </location>
</feature>
<accession>C5BGM6</accession>
<name>RS10_EDWI9</name>
<reference key="1">
    <citation type="submission" date="2009-03" db="EMBL/GenBank/DDBJ databases">
        <title>Complete genome sequence of Edwardsiella ictaluri 93-146.</title>
        <authorList>
            <person name="Williams M.L."/>
            <person name="Gillaspy A.F."/>
            <person name="Dyer D.W."/>
            <person name="Thune R.L."/>
            <person name="Waldbieser G.C."/>
            <person name="Schuster S.C."/>
            <person name="Gipson J."/>
            <person name="Zaitshik J."/>
            <person name="Landry C."/>
            <person name="Lawrence M.L."/>
        </authorList>
    </citation>
    <scope>NUCLEOTIDE SEQUENCE [LARGE SCALE GENOMIC DNA]</scope>
    <source>
        <strain>93-146</strain>
    </source>
</reference>
<keyword id="KW-0687">Ribonucleoprotein</keyword>
<keyword id="KW-0689">Ribosomal protein</keyword>